<dbReference type="EC" id="1.2.1.71" evidence="1"/>
<dbReference type="EMBL" id="AM747720">
    <property type="protein sequence ID" value="CAR51365.1"/>
    <property type="molecule type" value="Genomic_DNA"/>
</dbReference>
<dbReference type="RefSeq" id="WP_006488740.1">
    <property type="nucleotide sequence ID" value="NC_011000.1"/>
</dbReference>
<dbReference type="SMR" id="B4ECZ8"/>
<dbReference type="KEGG" id="bcj:BCAL1062"/>
<dbReference type="eggNOG" id="COG1012">
    <property type="taxonomic scope" value="Bacteria"/>
</dbReference>
<dbReference type="HOGENOM" id="CLU_005391_1_0_4"/>
<dbReference type="BioCyc" id="BCEN216591:G1G1V-1172-MONOMER"/>
<dbReference type="UniPathway" id="UPA00185">
    <property type="reaction ID" value="UER00282"/>
</dbReference>
<dbReference type="Proteomes" id="UP000001035">
    <property type="component" value="Chromosome 1"/>
</dbReference>
<dbReference type="GO" id="GO:0043824">
    <property type="term" value="F:succinylglutamate-semialdehyde dehydrogenase activity"/>
    <property type="evidence" value="ECO:0007669"/>
    <property type="project" value="UniProtKB-EC"/>
</dbReference>
<dbReference type="GO" id="GO:0019544">
    <property type="term" value="P:arginine catabolic process to glutamate"/>
    <property type="evidence" value="ECO:0007669"/>
    <property type="project" value="UniProtKB-UniRule"/>
</dbReference>
<dbReference type="GO" id="GO:0019545">
    <property type="term" value="P:arginine catabolic process to succinate"/>
    <property type="evidence" value="ECO:0007669"/>
    <property type="project" value="UniProtKB-UniRule"/>
</dbReference>
<dbReference type="CDD" id="cd07095">
    <property type="entry name" value="ALDH_SGSD_AstD"/>
    <property type="match status" value="1"/>
</dbReference>
<dbReference type="FunFam" id="3.40.605.10:FF:000010">
    <property type="entry name" value="N-succinylglutamate 5-semialdehyde dehydrogenase"/>
    <property type="match status" value="1"/>
</dbReference>
<dbReference type="Gene3D" id="3.40.605.10">
    <property type="entry name" value="Aldehyde Dehydrogenase, Chain A, domain 1"/>
    <property type="match status" value="1"/>
</dbReference>
<dbReference type="Gene3D" id="3.40.309.10">
    <property type="entry name" value="Aldehyde Dehydrogenase, Chain A, domain 2"/>
    <property type="match status" value="1"/>
</dbReference>
<dbReference type="HAMAP" id="MF_01174">
    <property type="entry name" value="Aldedh_AstD"/>
    <property type="match status" value="1"/>
</dbReference>
<dbReference type="InterPro" id="IPR016161">
    <property type="entry name" value="Ald_DH/histidinol_DH"/>
</dbReference>
<dbReference type="InterPro" id="IPR016163">
    <property type="entry name" value="Ald_DH_C"/>
</dbReference>
<dbReference type="InterPro" id="IPR016160">
    <property type="entry name" value="Ald_DH_CS_CYS"/>
</dbReference>
<dbReference type="InterPro" id="IPR029510">
    <property type="entry name" value="Ald_DH_CS_GLU"/>
</dbReference>
<dbReference type="InterPro" id="IPR016162">
    <property type="entry name" value="Ald_DH_N"/>
</dbReference>
<dbReference type="InterPro" id="IPR015590">
    <property type="entry name" value="Aldehyde_DH_dom"/>
</dbReference>
<dbReference type="InterPro" id="IPR017649">
    <property type="entry name" value="SuccinylGlu_semiald_DH_AstD"/>
</dbReference>
<dbReference type="NCBIfam" id="TIGR03240">
    <property type="entry name" value="arg_catab_astD"/>
    <property type="match status" value="1"/>
</dbReference>
<dbReference type="NCBIfam" id="NF006992">
    <property type="entry name" value="PRK09457.1"/>
    <property type="match status" value="1"/>
</dbReference>
<dbReference type="PANTHER" id="PTHR11699">
    <property type="entry name" value="ALDEHYDE DEHYDROGENASE-RELATED"/>
    <property type="match status" value="1"/>
</dbReference>
<dbReference type="Pfam" id="PF00171">
    <property type="entry name" value="Aldedh"/>
    <property type="match status" value="1"/>
</dbReference>
<dbReference type="SUPFAM" id="SSF53720">
    <property type="entry name" value="ALDH-like"/>
    <property type="match status" value="1"/>
</dbReference>
<dbReference type="PROSITE" id="PS00070">
    <property type="entry name" value="ALDEHYDE_DEHYDR_CYS"/>
    <property type="match status" value="1"/>
</dbReference>
<dbReference type="PROSITE" id="PS00687">
    <property type="entry name" value="ALDEHYDE_DEHYDR_GLU"/>
    <property type="match status" value="1"/>
</dbReference>
<accession>B4ECZ8</accession>
<organism>
    <name type="scientific">Burkholderia cenocepacia (strain ATCC BAA-245 / DSM 16553 / LMG 16656 / NCTC 13227 / J2315 / CF5610)</name>
    <name type="common">Burkholderia cepacia (strain J2315)</name>
    <dbReference type="NCBI Taxonomy" id="216591"/>
    <lineage>
        <taxon>Bacteria</taxon>
        <taxon>Pseudomonadati</taxon>
        <taxon>Pseudomonadota</taxon>
        <taxon>Betaproteobacteria</taxon>
        <taxon>Burkholderiales</taxon>
        <taxon>Burkholderiaceae</taxon>
        <taxon>Burkholderia</taxon>
        <taxon>Burkholderia cepacia complex</taxon>
    </lineage>
</organism>
<sequence length="487" mass="51701">MTELFIDGAWVAGSGPVFASRNPGTDAVAWQGDSASAADVDRAVASARRAFAGWSALDFEARCEIVKRFAALLTERKEAIATAIGRETGKPLWEARTEVASMAAKVGISIQAYQERTGEKRQDMADGVAVLRHRPHGVVAVFGPYNFPGHLPNGHIVPALIAGNTVVFKPSELAPGVARATVEVWQAAGLPPGVLNLVQGEKDTGIALANHRQIDGLFFTGSSDTGTLLHKQFGGRPEIVLALEMGGNNPLVIGEVEDVDAAVHHTIQSAFLSAGQRCTCARRIFVPQGAFGDRFLARFADVTSKITADVFDADPQPFMGAVISARAAAKLVDAQSRLVEQGAKPIIAMTQRDPRLGFVNAAIADVTGVANLPDEEHFGPLAQVVRYTTLDDAIERANDTAFGLSAGLLADDPKVWEHFRRTIRAGIVNWNRPTNGASSAAPFGGTGRSGNHRPSAYYAADYCAYPMASVESTQLTLPASLSPGLHF</sequence>
<protein>
    <recommendedName>
        <fullName evidence="1">N-succinylglutamate 5-semialdehyde dehydrogenase</fullName>
        <ecNumber evidence="1">1.2.1.71</ecNumber>
    </recommendedName>
    <alternativeName>
        <fullName evidence="1">Succinylglutamic semialdehyde dehydrogenase</fullName>
        <shortName evidence="1">SGSD</shortName>
    </alternativeName>
</protein>
<name>ASTD_BURCJ</name>
<gene>
    <name evidence="1" type="primary">astD</name>
    <name type="ordered locus">BceJ2315_10460</name>
    <name type="ORF">BCAL1062</name>
</gene>
<comment type="function">
    <text evidence="1">Catalyzes the NAD-dependent reduction of succinylglutamate semialdehyde into succinylglutamate.</text>
</comment>
<comment type="catalytic activity">
    <reaction evidence="1">
        <text>N-succinyl-L-glutamate 5-semialdehyde + NAD(+) + H2O = N-succinyl-L-glutamate + NADH + 2 H(+)</text>
        <dbReference type="Rhea" id="RHEA:10812"/>
        <dbReference type="ChEBI" id="CHEBI:15377"/>
        <dbReference type="ChEBI" id="CHEBI:15378"/>
        <dbReference type="ChEBI" id="CHEBI:57540"/>
        <dbReference type="ChEBI" id="CHEBI:57945"/>
        <dbReference type="ChEBI" id="CHEBI:58520"/>
        <dbReference type="ChEBI" id="CHEBI:58763"/>
        <dbReference type="EC" id="1.2.1.71"/>
    </reaction>
</comment>
<comment type="pathway">
    <text evidence="1">Amino-acid degradation; L-arginine degradation via AST pathway; L-glutamate and succinate from L-arginine: step 4/5.</text>
</comment>
<comment type="similarity">
    <text evidence="1">Belongs to the aldehyde dehydrogenase family. AstD subfamily.</text>
</comment>
<evidence type="ECO:0000255" key="1">
    <source>
        <dbReference type="HAMAP-Rule" id="MF_01174"/>
    </source>
</evidence>
<keyword id="KW-0056">Arginine metabolism</keyword>
<keyword id="KW-0520">NAD</keyword>
<keyword id="KW-0560">Oxidoreductase</keyword>
<proteinExistence type="inferred from homology"/>
<feature type="chain" id="PRO_1000138039" description="N-succinylglutamate 5-semialdehyde dehydrogenase">
    <location>
        <begin position="1"/>
        <end position="487"/>
    </location>
</feature>
<feature type="active site" evidence="1">
    <location>
        <position position="244"/>
    </location>
</feature>
<feature type="active site" evidence="1">
    <location>
        <position position="278"/>
    </location>
</feature>
<feature type="binding site" evidence="1">
    <location>
        <begin position="221"/>
        <end position="226"/>
    </location>
    <ligand>
        <name>NAD(+)</name>
        <dbReference type="ChEBI" id="CHEBI:57540"/>
    </ligand>
</feature>
<reference key="1">
    <citation type="journal article" date="2009" name="J. Bacteriol.">
        <title>The genome of Burkholderia cenocepacia J2315, an epidemic pathogen of cystic fibrosis patients.</title>
        <authorList>
            <person name="Holden M.T."/>
            <person name="Seth-Smith H.M."/>
            <person name="Crossman L.C."/>
            <person name="Sebaihia M."/>
            <person name="Bentley S.D."/>
            <person name="Cerdeno-Tarraga A.M."/>
            <person name="Thomson N.R."/>
            <person name="Bason N."/>
            <person name="Quail M.A."/>
            <person name="Sharp S."/>
            <person name="Cherevach I."/>
            <person name="Churcher C."/>
            <person name="Goodhead I."/>
            <person name="Hauser H."/>
            <person name="Holroyd N."/>
            <person name="Mungall K."/>
            <person name="Scott P."/>
            <person name="Walker D."/>
            <person name="White B."/>
            <person name="Rose H."/>
            <person name="Iversen P."/>
            <person name="Mil-Homens D."/>
            <person name="Rocha E.P."/>
            <person name="Fialho A.M."/>
            <person name="Baldwin A."/>
            <person name="Dowson C."/>
            <person name="Barrell B.G."/>
            <person name="Govan J.R."/>
            <person name="Vandamme P."/>
            <person name="Hart C.A."/>
            <person name="Mahenthiralingam E."/>
            <person name="Parkhill J."/>
        </authorList>
    </citation>
    <scope>NUCLEOTIDE SEQUENCE [LARGE SCALE GENOMIC DNA]</scope>
    <source>
        <strain>ATCC BAA-245 / DSM 16553 / LMG 16656 / NCTC 13227 / J2315 / CF5610</strain>
    </source>
</reference>